<protein>
    <recommendedName>
        <fullName evidence="2">Endolysin B</fullName>
    </recommendedName>
    <alternativeName>
        <fullName evidence="3">Gene 12 protein</fullName>
    </alternativeName>
    <alternativeName>
        <fullName evidence="3">Gp12</fullName>
    </alternativeName>
    <alternativeName>
        <fullName evidence="2">Mycolylarabinogalactan esterase</fullName>
        <ecNumber evidence="1">3.1.-.-</ecNumber>
    </alternativeName>
</protein>
<evidence type="ECO:0000269" key="1">
    <source>
    </source>
</evidence>
<evidence type="ECO:0000303" key="2">
    <source>
    </source>
</evidence>
<evidence type="ECO:0000305" key="3"/>
<evidence type="ECO:0000305" key="4">
    <source>
    </source>
</evidence>
<evidence type="ECO:0007744" key="5">
    <source>
        <dbReference type="PDB" id="3HC7"/>
    </source>
</evidence>
<evidence type="ECO:0007829" key="6">
    <source>
        <dbReference type="PDB" id="3HC7"/>
    </source>
</evidence>
<gene>
    <name type="primary">12</name>
</gene>
<proteinExistence type="evidence at protein level"/>
<reference key="1">
    <citation type="journal article" date="1998" name="J. Mol. Biol.">
        <title>Genome structure of mycobacteriophage D29: implications for phage evolution.</title>
        <authorList>
            <person name="Ford M.E."/>
            <person name="Sarkis G.J."/>
            <person name="Belanger A.E."/>
            <person name="Hendrix R.W."/>
            <person name="Hatfull G.F."/>
        </authorList>
    </citation>
    <scope>NUCLEOTIDE SEQUENCE [LARGE SCALE GENOMIC DNA]</scope>
</reference>
<reference evidence="5" key="2">
    <citation type="journal article" date="2009" name="Mol. Microbiol.">
        <title>Mycobacteriophage Lysin B is a novel mycolylarabinogalactan esterase.</title>
        <authorList>
            <person name="Payne K."/>
            <person name="Sun Q."/>
            <person name="Sacchettini J."/>
            <person name="Hatfull G.F."/>
        </authorList>
    </citation>
    <scope>X-RAY CRYSTALLOGRAPHY (2.00 ANGSTROMS)</scope>
    <scope>FUNCTION</scope>
    <scope>CATALYTIC ACTIVITY</scope>
    <scope>ACTIVE SITE</scope>
    <scope>MUTAGENESIS OF SER-82</scope>
</reference>
<accession>O64205</accession>
<sequence length="254" mass="28512">MSKPWLFTVHGTGQPDPLGPGLPADTARDVLDIYRWQPIGNYPAAAFPMWPSVEKGVAELILQIELKLDADPYADFAMAGYSQGAIVVGQVLKHHILPPTGRLHRFLHRLKKVIFWGNPMRQKGFAHSDEWIHPVAAPDTLGILEDRLENLEQYGFEVRDYAHDGDMYASIKEDDLHEYEVAIGRIVMKASGFIGGRDSVVAQLIELGQRPITEGIALAGAIIDALTFFARSRMGDKWPHLYNRYPAVEFLRQI</sequence>
<feature type="chain" id="PRO_0000164712" description="Endolysin B">
    <location>
        <begin position="1"/>
        <end position="254"/>
    </location>
</feature>
<feature type="active site" evidence="1">
    <location>
        <position position="82"/>
    </location>
</feature>
<feature type="active site" evidence="4">
    <location>
        <position position="166"/>
    </location>
</feature>
<feature type="active site" evidence="1 3">
    <location>
        <position position="240"/>
    </location>
</feature>
<feature type="mutagenesis site" description="Complete loss of mycolylarabinogalactan esterase activity." evidence="1">
    <original>S</original>
    <variation>A</variation>
    <location>
        <position position="82"/>
    </location>
</feature>
<feature type="strand" evidence="6">
    <location>
        <begin position="5"/>
        <end position="9"/>
    </location>
</feature>
<feature type="strand" evidence="6">
    <location>
        <begin position="19"/>
        <end position="21"/>
    </location>
</feature>
<feature type="helix" evidence="6">
    <location>
        <begin position="22"/>
        <end position="27"/>
    </location>
</feature>
<feature type="turn" evidence="6">
    <location>
        <begin position="31"/>
        <end position="33"/>
    </location>
</feature>
<feature type="strand" evidence="6">
    <location>
        <begin position="34"/>
        <end position="38"/>
    </location>
</feature>
<feature type="strand" evidence="6">
    <location>
        <begin position="46"/>
        <end position="48"/>
    </location>
</feature>
<feature type="helix" evidence="6">
    <location>
        <begin position="50"/>
        <end position="70"/>
    </location>
</feature>
<feature type="strand" evidence="6">
    <location>
        <begin position="76"/>
        <end position="81"/>
    </location>
</feature>
<feature type="helix" evidence="6">
    <location>
        <begin position="83"/>
        <end position="95"/>
    </location>
</feature>
<feature type="helix" evidence="6">
    <location>
        <begin position="104"/>
        <end position="109"/>
    </location>
</feature>
<feature type="strand" evidence="6">
    <location>
        <begin position="110"/>
        <end position="117"/>
    </location>
</feature>
<feature type="strand" evidence="6">
    <location>
        <begin position="130"/>
        <end position="133"/>
    </location>
</feature>
<feature type="strand" evidence="6">
    <location>
        <begin position="143"/>
        <end position="146"/>
    </location>
</feature>
<feature type="helix" evidence="6">
    <location>
        <begin position="151"/>
        <end position="153"/>
    </location>
</feature>
<feature type="strand" evidence="6">
    <location>
        <begin position="154"/>
        <end position="161"/>
    </location>
</feature>
<feature type="helix" evidence="6">
    <location>
        <begin position="167"/>
        <end position="169"/>
    </location>
</feature>
<feature type="helix" evidence="6">
    <location>
        <begin position="173"/>
        <end position="175"/>
    </location>
</feature>
<feature type="helix" evidence="6">
    <location>
        <begin position="179"/>
        <end position="189"/>
    </location>
</feature>
<feature type="strand" evidence="6">
    <location>
        <begin position="193"/>
        <end position="196"/>
    </location>
</feature>
<feature type="helix" evidence="6">
    <location>
        <begin position="200"/>
        <end position="207"/>
    </location>
</feature>
<feature type="helix" evidence="6">
    <location>
        <begin position="212"/>
        <end position="230"/>
    </location>
</feature>
<feature type="helix" evidence="6">
    <location>
        <begin position="245"/>
        <end position="251"/>
    </location>
</feature>
<organism>
    <name type="scientific">Mycobacterium phage D29</name>
    <name type="common">Mycobacteriophage D29</name>
    <dbReference type="NCBI Taxonomy" id="28369"/>
    <lineage>
        <taxon>Viruses</taxon>
        <taxon>Duplodnaviria</taxon>
        <taxon>Heunggongvirae</taxon>
        <taxon>Uroviricota</taxon>
        <taxon>Caudoviricetes</taxon>
        <taxon>Fromanvirus</taxon>
    </lineage>
</organism>
<organismHost>
    <name type="scientific">Mycobacterium</name>
    <dbReference type="NCBI Taxonomy" id="1763"/>
</organismHost>
<comment type="function">
    <text evidence="1">Endolysin that degrades the junction between mycolic acid and peptidoglycans in the host cell wall and participates with the holin protein in the sequential events which lead to the programmed host cell lysis releasing the mature viral particles. Once the holin has permeabilized the host cell membrane, the endolysin can reach the periplasm and break down the mycolic acid-rich outer membrane. Cleaves the ester linkage joining the mycolic acid-rich outer membrane to arabinogalactan, releasing free mycolic acids.</text>
</comment>
<comment type="similarity">
    <text evidence="3">Belongs to the L5likevirus endolysin B protein family.</text>
</comment>
<name>LYSB_BPMD2</name>
<dbReference type="EC" id="3.1.-.-" evidence="1"/>
<dbReference type="EMBL" id="AF022214">
    <property type="protein sequence ID" value="AAC18452.1"/>
    <property type="molecule type" value="Genomic_DNA"/>
</dbReference>
<dbReference type="PIR" id="A72801">
    <property type="entry name" value="A72801"/>
</dbReference>
<dbReference type="RefSeq" id="NP_046827.1">
    <property type="nucleotide sequence ID" value="NC_001900.1"/>
</dbReference>
<dbReference type="PDB" id="3HC7">
    <property type="method" value="X-ray"/>
    <property type="resolution" value="2.00 A"/>
    <property type="chains" value="A=1-254"/>
</dbReference>
<dbReference type="PDBsum" id="3HC7"/>
<dbReference type="SMR" id="O64205"/>
<dbReference type="ESTHER" id="bpmd2-vg12">
    <property type="family name" value="Lysin_B_C_ter"/>
</dbReference>
<dbReference type="GeneID" id="1261627"/>
<dbReference type="KEGG" id="vg:1261627"/>
<dbReference type="OrthoDB" id="4625at10239"/>
<dbReference type="EvolutionaryTrace" id="O64205"/>
<dbReference type="Proteomes" id="UP000002131">
    <property type="component" value="Segment"/>
</dbReference>
<dbReference type="GO" id="GO:0016787">
    <property type="term" value="F:hydrolase activity"/>
    <property type="evidence" value="ECO:0000314"/>
    <property type="project" value="CACAO"/>
</dbReference>
<dbReference type="GO" id="GO:0042742">
    <property type="term" value="P:defense response to bacterium"/>
    <property type="evidence" value="ECO:0007669"/>
    <property type="project" value="UniProtKB-KW"/>
</dbReference>
<dbReference type="GO" id="GO:0044659">
    <property type="term" value="P:viral release from host cell by cytolysis"/>
    <property type="evidence" value="ECO:0000314"/>
    <property type="project" value="UniProtKB"/>
</dbReference>
<dbReference type="Gene3D" id="3.40.50.1820">
    <property type="entry name" value="alpha/beta hydrolase"/>
    <property type="match status" value="1"/>
</dbReference>
<dbReference type="Gene3D" id="1.10.10.1120">
    <property type="entry name" value="Lysin B, C-terminal linker domain"/>
    <property type="match status" value="1"/>
</dbReference>
<dbReference type="InterPro" id="IPR029058">
    <property type="entry name" value="AB_hydrolase_fold"/>
</dbReference>
<dbReference type="InterPro" id="IPR000675">
    <property type="entry name" value="Cutinase/axe"/>
</dbReference>
<dbReference type="InterPro" id="IPR041855">
    <property type="entry name" value="Lysin_B_C_ter"/>
</dbReference>
<dbReference type="Pfam" id="PF01083">
    <property type="entry name" value="Cutinase"/>
    <property type="match status" value="1"/>
</dbReference>
<dbReference type="SUPFAM" id="SSF53474">
    <property type="entry name" value="alpha/beta-Hydrolases"/>
    <property type="match status" value="1"/>
</dbReference>
<keyword id="KW-0002">3D-structure</keyword>
<keyword id="KW-0929">Antimicrobial</keyword>
<keyword id="KW-0081">Bacteriolytic enzyme</keyword>
<keyword id="KW-0204">Cytolysis</keyword>
<keyword id="KW-0578">Host cell lysis by virus</keyword>
<keyword id="KW-0378">Hydrolase</keyword>
<keyword id="KW-1185">Reference proteome</keyword>
<keyword id="KW-1188">Viral release from host cell</keyword>